<dbReference type="EC" id="3.5.1.1"/>
<dbReference type="EMBL" id="AE000513">
    <property type="protein sequence ID" value="AAF11899.1"/>
    <property type="status" value="ALT_INIT"/>
    <property type="molecule type" value="Genomic_DNA"/>
</dbReference>
<dbReference type="PIR" id="G75283">
    <property type="entry name" value="G75283"/>
</dbReference>
<dbReference type="RefSeq" id="NP_296074.1">
    <property type="nucleotide sequence ID" value="NC_001263.1"/>
</dbReference>
<dbReference type="RefSeq" id="WP_034350512.1">
    <property type="nucleotide sequence ID" value="NC_001263.1"/>
</dbReference>
<dbReference type="SMR" id="Q9RRX9"/>
<dbReference type="FunCoup" id="Q9RRX9">
    <property type="interactions" value="56"/>
</dbReference>
<dbReference type="STRING" id="243230.DR_2353"/>
<dbReference type="PaxDb" id="243230-DR_2353"/>
<dbReference type="EnsemblBacteria" id="AAF11899">
    <property type="protein sequence ID" value="AAF11899"/>
    <property type="gene ID" value="DR_2353"/>
</dbReference>
<dbReference type="GeneID" id="69518603"/>
<dbReference type="KEGG" id="dra:DR_2353"/>
<dbReference type="PATRIC" id="fig|243230.17.peg.2587"/>
<dbReference type="eggNOG" id="COG0252">
    <property type="taxonomic scope" value="Bacteria"/>
</dbReference>
<dbReference type="HOGENOM" id="CLU_019134_1_0_0"/>
<dbReference type="InParanoid" id="Q9RRX9"/>
<dbReference type="OrthoDB" id="9788068at2"/>
<dbReference type="Proteomes" id="UP000002524">
    <property type="component" value="Chromosome 1"/>
</dbReference>
<dbReference type="GO" id="GO:0005737">
    <property type="term" value="C:cytoplasm"/>
    <property type="evidence" value="ECO:0007669"/>
    <property type="project" value="UniProtKB-SubCell"/>
</dbReference>
<dbReference type="GO" id="GO:0004067">
    <property type="term" value="F:asparaginase activity"/>
    <property type="evidence" value="ECO:0007669"/>
    <property type="project" value="UniProtKB-EC"/>
</dbReference>
<dbReference type="GO" id="GO:0006528">
    <property type="term" value="P:asparagine metabolic process"/>
    <property type="evidence" value="ECO:0007669"/>
    <property type="project" value="InterPro"/>
</dbReference>
<dbReference type="CDD" id="cd08964">
    <property type="entry name" value="L-asparaginase_II"/>
    <property type="match status" value="1"/>
</dbReference>
<dbReference type="FunFam" id="3.40.50.1170:FF:000001">
    <property type="entry name" value="L-asparaginase 2"/>
    <property type="match status" value="1"/>
</dbReference>
<dbReference type="Gene3D" id="3.40.50.40">
    <property type="match status" value="1"/>
</dbReference>
<dbReference type="Gene3D" id="3.40.50.1170">
    <property type="entry name" value="L-asparaginase, N-terminal domain"/>
    <property type="match status" value="1"/>
</dbReference>
<dbReference type="InterPro" id="IPR004550">
    <property type="entry name" value="AsnASE_II"/>
</dbReference>
<dbReference type="InterPro" id="IPR036152">
    <property type="entry name" value="Asp/glu_Ase-like_sf"/>
</dbReference>
<dbReference type="InterPro" id="IPR006034">
    <property type="entry name" value="Asparaginase/glutaminase-like"/>
</dbReference>
<dbReference type="InterPro" id="IPR020827">
    <property type="entry name" value="Asparaginase/glutaminase_AS1"/>
</dbReference>
<dbReference type="InterPro" id="IPR027475">
    <property type="entry name" value="Asparaginase/glutaminase_AS2"/>
</dbReference>
<dbReference type="InterPro" id="IPR040919">
    <property type="entry name" value="Asparaginase_C"/>
</dbReference>
<dbReference type="InterPro" id="IPR027473">
    <property type="entry name" value="L-asparaginase_C"/>
</dbReference>
<dbReference type="InterPro" id="IPR027474">
    <property type="entry name" value="L-asparaginase_N"/>
</dbReference>
<dbReference type="InterPro" id="IPR037152">
    <property type="entry name" value="L-asparaginase_N_sf"/>
</dbReference>
<dbReference type="PANTHER" id="PTHR11707:SF28">
    <property type="entry name" value="60 KDA LYSOPHOSPHOLIPASE"/>
    <property type="match status" value="1"/>
</dbReference>
<dbReference type="PANTHER" id="PTHR11707">
    <property type="entry name" value="L-ASPARAGINASE"/>
    <property type="match status" value="1"/>
</dbReference>
<dbReference type="Pfam" id="PF00710">
    <property type="entry name" value="Asparaginase"/>
    <property type="match status" value="1"/>
</dbReference>
<dbReference type="Pfam" id="PF17763">
    <property type="entry name" value="Asparaginase_C"/>
    <property type="match status" value="1"/>
</dbReference>
<dbReference type="PIRSF" id="PIRSF001220">
    <property type="entry name" value="L-ASNase_gatD"/>
    <property type="match status" value="1"/>
</dbReference>
<dbReference type="PIRSF" id="PIRSF500176">
    <property type="entry name" value="L_ASNase"/>
    <property type="match status" value="1"/>
</dbReference>
<dbReference type="PRINTS" id="PR00139">
    <property type="entry name" value="ASNGLNASE"/>
</dbReference>
<dbReference type="SFLD" id="SFLDS00057">
    <property type="entry name" value="Glutaminase/Asparaginase"/>
    <property type="match status" value="1"/>
</dbReference>
<dbReference type="SMART" id="SM00870">
    <property type="entry name" value="Asparaginase"/>
    <property type="match status" value="1"/>
</dbReference>
<dbReference type="SUPFAM" id="SSF53774">
    <property type="entry name" value="Glutaminase/Asparaginase"/>
    <property type="match status" value="1"/>
</dbReference>
<dbReference type="PROSITE" id="PS00144">
    <property type="entry name" value="ASN_GLN_ASE_1"/>
    <property type="match status" value="1"/>
</dbReference>
<dbReference type="PROSITE" id="PS00917">
    <property type="entry name" value="ASN_GLN_ASE_2"/>
    <property type="match status" value="1"/>
</dbReference>
<dbReference type="PROSITE" id="PS51732">
    <property type="entry name" value="ASN_GLN_ASE_3"/>
    <property type="match status" value="1"/>
</dbReference>
<feature type="chain" id="PRO_0000171078" description="Probable L-asparaginase">
    <location>
        <begin position="1"/>
        <end position="322"/>
    </location>
</feature>
<feature type="domain" description="Asparaginase/glutaminase" evidence="2">
    <location>
        <begin position="6"/>
        <end position="320"/>
    </location>
</feature>
<feature type="region of interest" description="Disordered" evidence="5">
    <location>
        <begin position="13"/>
        <end position="37"/>
    </location>
</feature>
<feature type="active site" description="O-isoaspartyl threonine intermediate" evidence="3 4">
    <location>
        <position position="16"/>
    </location>
</feature>
<feature type="binding site" evidence="1">
    <location>
        <position position="54"/>
    </location>
    <ligand>
        <name>substrate</name>
    </ligand>
</feature>
<feature type="binding site" evidence="1">
    <location>
        <begin position="85"/>
        <end position="86"/>
    </location>
    <ligand>
        <name>substrate</name>
    </ligand>
</feature>
<organism>
    <name type="scientific">Deinococcus radiodurans (strain ATCC 13939 / DSM 20539 / JCM 16871 / CCUG 27074 / LMG 4051 / NBRC 15346 / NCIMB 9279 / VKM B-1422 / R1)</name>
    <dbReference type="NCBI Taxonomy" id="243230"/>
    <lineage>
        <taxon>Bacteria</taxon>
        <taxon>Thermotogati</taxon>
        <taxon>Deinococcota</taxon>
        <taxon>Deinococci</taxon>
        <taxon>Deinococcales</taxon>
        <taxon>Deinococcaceae</taxon>
        <taxon>Deinococcus</taxon>
    </lineage>
</organism>
<gene>
    <name type="primary">ansA</name>
    <name type="ordered locus">DR_2353</name>
</gene>
<sequence length="322" mass="33807">MPASLPRLALIHTGGTIASRPSPDGRGLTPQTPPALPGLEGVQVSEHQPFNLPSPHVTPAHMQQLAHLIEQLAGGHDAVVVTHGTDTLEETAFFLHLCLPAGLPVVLTGSMRHAEEVSWDGPGNLLDAAQVALCPQTAGRGPLVVFGGDIFDARTVTKVHTSAVDAFGGYPGPIGRIDRTAAGPQVHYFARPEPRPTFRPVTLERRVEILYAYAGWQGEGYAGALERADGLVIAALGTGNLPPELLPLIAATDKPVVLATRTHAGPILPVYGYAGGGATLVEAGAIPASFLNAHKARLLLLVLLNLGASREDIRRVFTQGVF</sequence>
<comment type="catalytic activity">
    <reaction>
        <text>L-asparagine + H2O = L-aspartate + NH4(+)</text>
        <dbReference type="Rhea" id="RHEA:21016"/>
        <dbReference type="ChEBI" id="CHEBI:15377"/>
        <dbReference type="ChEBI" id="CHEBI:28938"/>
        <dbReference type="ChEBI" id="CHEBI:29991"/>
        <dbReference type="ChEBI" id="CHEBI:58048"/>
        <dbReference type="EC" id="3.5.1.1"/>
    </reaction>
</comment>
<comment type="subcellular location">
    <subcellularLocation>
        <location evidence="6">Cytoplasm</location>
    </subcellularLocation>
</comment>
<comment type="similarity">
    <text evidence="6">Belongs to the asparaginase 1 family.</text>
</comment>
<comment type="sequence caution" evidence="6">
    <conflict type="erroneous initiation">
        <sequence resource="EMBL-CDS" id="AAF11899"/>
    </conflict>
</comment>
<keyword id="KW-0963">Cytoplasm</keyword>
<keyword id="KW-0378">Hydrolase</keyword>
<keyword id="KW-1185">Reference proteome</keyword>
<evidence type="ECO:0000250" key="1"/>
<evidence type="ECO:0000255" key="2">
    <source>
        <dbReference type="PROSITE-ProRule" id="PRU01068"/>
    </source>
</evidence>
<evidence type="ECO:0000255" key="3">
    <source>
        <dbReference type="PROSITE-ProRule" id="PRU10099"/>
    </source>
</evidence>
<evidence type="ECO:0000255" key="4">
    <source>
        <dbReference type="PROSITE-ProRule" id="PRU10100"/>
    </source>
</evidence>
<evidence type="ECO:0000256" key="5">
    <source>
        <dbReference type="SAM" id="MobiDB-lite"/>
    </source>
</evidence>
<evidence type="ECO:0000305" key="6"/>
<protein>
    <recommendedName>
        <fullName>Probable L-asparaginase</fullName>
        <shortName>L-ASNase</shortName>
        <ecNumber>3.5.1.1</ecNumber>
    </recommendedName>
    <alternativeName>
        <fullName>L-asparagine amidohydrolase</fullName>
    </alternativeName>
</protein>
<proteinExistence type="inferred from homology"/>
<name>ASPG_DEIRA</name>
<reference key="1">
    <citation type="journal article" date="1999" name="Science">
        <title>Genome sequence of the radioresistant bacterium Deinococcus radiodurans R1.</title>
        <authorList>
            <person name="White O."/>
            <person name="Eisen J.A."/>
            <person name="Heidelberg J.F."/>
            <person name="Hickey E.K."/>
            <person name="Peterson J.D."/>
            <person name="Dodson R.J."/>
            <person name="Haft D.H."/>
            <person name="Gwinn M.L."/>
            <person name="Nelson W.C."/>
            <person name="Richardson D.L."/>
            <person name="Moffat K.S."/>
            <person name="Qin H."/>
            <person name="Jiang L."/>
            <person name="Pamphile W."/>
            <person name="Crosby M."/>
            <person name="Shen M."/>
            <person name="Vamathevan J.J."/>
            <person name="Lam P."/>
            <person name="McDonald L.A."/>
            <person name="Utterback T.R."/>
            <person name="Zalewski C."/>
            <person name="Makarova K.S."/>
            <person name="Aravind L."/>
            <person name="Daly M.J."/>
            <person name="Minton K.W."/>
            <person name="Fleischmann R.D."/>
            <person name="Ketchum K.A."/>
            <person name="Nelson K.E."/>
            <person name="Salzberg S.L."/>
            <person name="Smith H.O."/>
            <person name="Venter J.C."/>
            <person name="Fraser C.M."/>
        </authorList>
    </citation>
    <scope>NUCLEOTIDE SEQUENCE [LARGE SCALE GENOMIC DNA]</scope>
    <source>
        <strain>ATCC 13939 / DSM 20539 / JCM 16871 / CCUG 27074 / LMG 4051 / NBRC 15346 / NCIMB 9279 / VKM B-1422 / R1</strain>
    </source>
</reference>
<accession>Q9RRX9</accession>